<proteinExistence type="inferred from homology"/>
<evidence type="ECO:0000255" key="1">
    <source>
        <dbReference type="HAMAP-Rule" id="MF_01007"/>
    </source>
</evidence>
<comment type="function">
    <text evidence="1">Specifically methylates the N4 position of cytidine in position 1402 (C1402) of 16S rRNA.</text>
</comment>
<comment type="catalytic activity">
    <reaction evidence="1">
        <text>cytidine(1402) in 16S rRNA + S-adenosyl-L-methionine = N(4)-methylcytidine(1402) in 16S rRNA + S-adenosyl-L-homocysteine + H(+)</text>
        <dbReference type="Rhea" id="RHEA:42928"/>
        <dbReference type="Rhea" id="RHEA-COMP:10286"/>
        <dbReference type="Rhea" id="RHEA-COMP:10287"/>
        <dbReference type="ChEBI" id="CHEBI:15378"/>
        <dbReference type="ChEBI" id="CHEBI:57856"/>
        <dbReference type="ChEBI" id="CHEBI:59789"/>
        <dbReference type="ChEBI" id="CHEBI:74506"/>
        <dbReference type="ChEBI" id="CHEBI:82748"/>
        <dbReference type="EC" id="2.1.1.199"/>
    </reaction>
</comment>
<comment type="subcellular location">
    <subcellularLocation>
        <location evidence="1">Cytoplasm</location>
    </subcellularLocation>
</comment>
<comment type="similarity">
    <text evidence="1">Belongs to the methyltransferase superfamily. RsmH family.</text>
</comment>
<reference key="1">
    <citation type="submission" date="2003-10" db="EMBL/GenBank/DDBJ databases">
        <title>The complete genome sequence of the alkaliphilic Bacillus clausii KSM-K16.</title>
        <authorList>
            <person name="Takaki Y."/>
            <person name="Kageyama Y."/>
            <person name="Shimamura S."/>
            <person name="Suzuki H."/>
            <person name="Nishi S."/>
            <person name="Hatada Y."/>
            <person name="Kawai S."/>
            <person name="Ito S."/>
            <person name="Horikoshi K."/>
        </authorList>
    </citation>
    <scope>NUCLEOTIDE SEQUENCE [LARGE SCALE GENOMIC DNA]</scope>
    <source>
        <strain>KSM-K16</strain>
    </source>
</reference>
<sequence>MFSHITVLKEESVNGLAVKPGGVYVDCTLGGGGHSERILTALAGEGHLYAFDQDEAALSFAAEKLSRFKENITFIRSNFRHIKEELRMRGVDKVDGILFDLGVSSPQLDEASRGFSYHQDAPLDMRMDQSASLTAREVVNTWPFAKLHSIISRYGEEKFSKQIARKIEAYRLKQPIETTGELVDIIKEAIPAPARRAGGHPAKRTFQAIRIAVNDELGAFEDALTDGFELLNEGGRMAVITFHSLEDRLCKQMFKEKTKLPDLPKGLPIIPADQKAPFALITKKPIVANDEEIKANNRARSAKLRIIEKEKQTD</sequence>
<gene>
    <name evidence="1" type="primary">rsmH</name>
    <name type="synonym">mraW</name>
    <name type="ordered locus">ABC2364</name>
</gene>
<accession>Q5WFG1</accession>
<feature type="chain" id="PRO_0000108577" description="Ribosomal RNA small subunit methyltransferase H">
    <location>
        <begin position="1"/>
        <end position="314"/>
    </location>
</feature>
<feature type="binding site" evidence="1">
    <location>
        <begin position="32"/>
        <end position="34"/>
    </location>
    <ligand>
        <name>S-adenosyl-L-methionine</name>
        <dbReference type="ChEBI" id="CHEBI:59789"/>
    </ligand>
</feature>
<feature type="binding site" evidence="1">
    <location>
        <position position="52"/>
    </location>
    <ligand>
        <name>S-adenosyl-L-methionine</name>
        <dbReference type="ChEBI" id="CHEBI:59789"/>
    </ligand>
</feature>
<feature type="binding site" evidence="1">
    <location>
        <position position="79"/>
    </location>
    <ligand>
        <name>S-adenosyl-L-methionine</name>
        <dbReference type="ChEBI" id="CHEBI:59789"/>
    </ligand>
</feature>
<feature type="binding site" evidence="1">
    <location>
        <position position="100"/>
    </location>
    <ligand>
        <name>S-adenosyl-L-methionine</name>
        <dbReference type="ChEBI" id="CHEBI:59789"/>
    </ligand>
</feature>
<feature type="binding site" evidence="1">
    <location>
        <position position="107"/>
    </location>
    <ligand>
        <name>S-adenosyl-L-methionine</name>
        <dbReference type="ChEBI" id="CHEBI:59789"/>
    </ligand>
</feature>
<organism>
    <name type="scientific">Shouchella clausii (strain KSM-K16)</name>
    <name type="common">Alkalihalobacillus clausii</name>
    <dbReference type="NCBI Taxonomy" id="66692"/>
    <lineage>
        <taxon>Bacteria</taxon>
        <taxon>Bacillati</taxon>
        <taxon>Bacillota</taxon>
        <taxon>Bacilli</taxon>
        <taxon>Bacillales</taxon>
        <taxon>Bacillaceae</taxon>
        <taxon>Shouchella</taxon>
    </lineage>
</organism>
<dbReference type="EC" id="2.1.1.199" evidence="1"/>
<dbReference type="EMBL" id="AP006627">
    <property type="protein sequence ID" value="BAD64899.1"/>
    <property type="molecule type" value="Genomic_DNA"/>
</dbReference>
<dbReference type="RefSeq" id="WP_011247207.1">
    <property type="nucleotide sequence ID" value="NC_006582.1"/>
</dbReference>
<dbReference type="SMR" id="Q5WFG1"/>
<dbReference type="STRING" id="66692.ABC2364"/>
<dbReference type="KEGG" id="bcl:ABC2364"/>
<dbReference type="eggNOG" id="COG0275">
    <property type="taxonomic scope" value="Bacteria"/>
</dbReference>
<dbReference type="HOGENOM" id="CLU_038422_2_0_9"/>
<dbReference type="OrthoDB" id="9806637at2"/>
<dbReference type="Proteomes" id="UP000001168">
    <property type="component" value="Chromosome"/>
</dbReference>
<dbReference type="GO" id="GO:0005737">
    <property type="term" value="C:cytoplasm"/>
    <property type="evidence" value="ECO:0007669"/>
    <property type="project" value="UniProtKB-SubCell"/>
</dbReference>
<dbReference type="GO" id="GO:0071424">
    <property type="term" value="F:rRNA (cytosine-N4-)-methyltransferase activity"/>
    <property type="evidence" value="ECO:0007669"/>
    <property type="project" value="UniProtKB-UniRule"/>
</dbReference>
<dbReference type="GO" id="GO:0070475">
    <property type="term" value="P:rRNA base methylation"/>
    <property type="evidence" value="ECO:0007669"/>
    <property type="project" value="UniProtKB-UniRule"/>
</dbReference>
<dbReference type="FunFam" id="1.10.150.170:FF:000001">
    <property type="entry name" value="Ribosomal RNA small subunit methyltransferase H"/>
    <property type="match status" value="1"/>
</dbReference>
<dbReference type="Gene3D" id="1.10.150.170">
    <property type="entry name" value="Putative methyltransferase TM0872, insert domain"/>
    <property type="match status" value="1"/>
</dbReference>
<dbReference type="Gene3D" id="3.40.50.150">
    <property type="entry name" value="Vaccinia Virus protein VP39"/>
    <property type="match status" value="1"/>
</dbReference>
<dbReference type="HAMAP" id="MF_01007">
    <property type="entry name" value="16SrRNA_methyltr_H"/>
    <property type="match status" value="1"/>
</dbReference>
<dbReference type="InterPro" id="IPR002903">
    <property type="entry name" value="RsmH"/>
</dbReference>
<dbReference type="InterPro" id="IPR023397">
    <property type="entry name" value="SAM-dep_MeTrfase_MraW_recog"/>
</dbReference>
<dbReference type="InterPro" id="IPR029063">
    <property type="entry name" value="SAM-dependent_MTases_sf"/>
</dbReference>
<dbReference type="NCBIfam" id="TIGR00006">
    <property type="entry name" value="16S rRNA (cytosine(1402)-N(4))-methyltransferase RsmH"/>
    <property type="match status" value="1"/>
</dbReference>
<dbReference type="PANTHER" id="PTHR11265:SF0">
    <property type="entry name" value="12S RRNA N4-METHYLCYTIDINE METHYLTRANSFERASE"/>
    <property type="match status" value="1"/>
</dbReference>
<dbReference type="PANTHER" id="PTHR11265">
    <property type="entry name" value="S-ADENOSYL-METHYLTRANSFERASE MRAW"/>
    <property type="match status" value="1"/>
</dbReference>
<dbReference type="Pfam" id="PF01795">
    <property type="entry name" value="Methyltransf_5"/>
    <property type="match status" value="1"/>
</dbReference>
<dbReference type="PIRSF" id="PIRSF004486">
    <property type="entry name" value="MraW"/>
    <property type="match status" value="1"/>
</dbReference>
<dbReference type="SUPFAM" id="SSF81799">
    <property type="entry name" value="Putative methyltransferase TM0872, insert domain"/>
    <property type="match status" value="1"/>
</dbReference>
<dbReference type="SUPFAM" id="SSF53335">
    <property type="entry name" value="S-adenosyl-L-methionine-dependent methyltransferases"/>
    <property type="match status" value="1"/>
</dbReference>
<keyword id="KW-0963">Cytoplasm</keyword>
<keyword id="KW-0489">Methyltransferase</keyword>
<keyword id="KW-1185">Reference proteome</keyword>
<keyword id="KW-0698">rRNA processing</keyword>
<keyword id="KW-0949">S-adenosyl-L-methionine</keyword>
<keyword id="KW-0808">Transferase</keyword>
<protein>
    <recommendedName>
        <fullName evidence="1">Ribosomal RNA small subunit methyltransferase H</fullName>
        <ecNumber evidence="1">2.1.1.199</ecNumber>
    </recommendedName>
    <alternativeName>
        <fullName evidence="1">16S rRNA m(4)C1402 methyltransferase</fullName>
    </alternativeName>
    <alternativeName>
        <fullName evidence="1">rRNA (cytosine-N(4)-)-methyltransferase RsmH</fullName>
    </alternativeName>
</protein>
<name>RSMH_SHOC1</name>